<feature type="chain" id="PRO_0000233513" description="Small ribosomal subunit protein uS17">
    <location>
        <begin position="1"/>
        <end position="91"/>
    </location>
</feature>
<accession>Q8EUC2</accession>
<dbReference type="EMBL" id="BA000026">
    <property type="protein sequence ID" value="BAC44794.1"/>
    <property type="molecule type" value="Genomic_DNA"/>
</dbReference>
<dbReference type="RefSeq" id="WP_011077822.1">
    <property type="nucleotide sequence ID" value="NC_004432.1"/>
</dbReference>
<dbReference type="SMR" id="Q8EUC2"/>
<dbReference type="FunCoup" id="Q8EUC2">
    <property type="interactions" value="227"/>
</dbReference>
<dbReference type="STRING" id="272633.gene:10732128"/>
<dbReference type="KEGG" id="mpe:MYPE10080"/>
<dbReference type="eggNOG" id="COG0186">
    <property type="taxonomic scope" value="Bacteria"/>
</dbReference>
<dbReference type="HOGENOM" id="CLU_073626_1_0_14"/>
<dbReference type="InParanoid" id="Q8EUC2"/>
<dbReference type="Proteomes" id="UP000002522">
    <property type="component" value="Chromosome"/>
</dbReference>
<dbReference type="GO" id="GO:0022627">
    <property type="term" value="C:cytosolic small ribosomal subunit"/>
    <property type="evidence" value="ECO:0007669"/>
    <property type="project" value="TreeGrafter"/>
</dbReference>
<dbReference type="GO" id="GO:0019843">
    <property type="term" value="F:rRNA binding"/>
    <property type="evidence" value="ECO:0007669"/>
    <property type="project" value="UniProtKB-UniRule"/>
</dbReference>
<dbReference type="GO" id="GO:0003735">
    <property type="term" value="F:structural constituent of ribosome"/>
    <property type="evidence" value="ECO:0007669"/>
    <property type="project" value="InterPro"/>
</dbReference>
<dbReference type="GO" id="GO:0006412">
    <property type="term" value="P:translation"/>
    <property type="evidence" value="ECO:0007669"/>
    <property type="project" value="UniProtKB-UniRule"/>
</dbReference>
<dbReference type="CDD" id="cd00364">
    <property type="entry name" value="Ribosomal_uS17"/>
    <property type="match status" value="1"/>
</dbReference>
<dbReference type="Gene3D" id="2.40.50.140">
    <property type="entry name" value="Nucleic acid-binding proteins"/>
    <property type="match status" value="1"/>
</dbReference>
<dbReference type="HAMAP" id="MF_01345_B">
    <property type="entry name" value="Ribosomal_uS17_B"/>
    <property type="match status" value="1"/>
</dbReference>
<dbReference type="InterPro" id="IPR012340">
    <property type="entry name" value="NA-bd_OB-fold"/>
</dbReference>
<dbReference type="InterPro" id="IPR000266">
    <property type="entry name" value="Ribosomal_uS17"/>
</dbReference>
<dbReference type="InterPro" id="IPR019984">
    <property type="entry name" value="Ribosomal_uS17_bact/chlr"/>
</dbReference>
<dbReference type="InterPro" id="IPR019979">
    <property type="entry name" value="Ribosomal_uS17_CS"/>
</dbReference>
<dbReference type="NCBIfam" id="NF004123">
    <property type="entry name" value="PRK05610.1"/>
    <property type="match status" value="1"/>
</dbReference>
<dbReference type="NCBIfam" id="TIGR03635">
    <property type="entry name" value="uS17_bact"/>
    <property type="match status" value="1"/>
</dbReference>
<dbReference type="PANTHER" id="PTHR10744">
    <property type="entry name" value="40S RIBOSOMAL PROTEIN S11 FAMILY MEMBER"/>
    <property type="match status" value="1"/>
</dbReference>
<dbReference type="PANTHER" id="PTHR10744:SF1">
    <property type="entry name" value="SMALL RIBOSOMAL SUBUNIT PROTEIN US17M"/>
    <property type="match status" value="1"/>
</dbReference>
<dbReference type="Pfam" id="PF00366">
    <property type="entry name" value="Ribosomal_S17"/>
    <property type="match status" value="1"/>
</dbReference>
<dbReference type="PRINTS" id="PR00973">
    <property type="entry name" value="RIBOSOMALS17"/>
</dbReference>
<dbReference type="SUPFAM" id="SSF50249">
    <property type="entry name" value="Nucleic acid-binding proteins"/>
    <property type="match status" value="1"/>
</dbReference>
<dbReference type="PROSITE" id="PS00056">
    <property type="entry name" value="RIBOSOMAL_S17"/>
    <property type="match status" value="1"/>
</dbReference>
<keyword id="KW-1185">Reference proteome</keyword>
<keyword id="KW-0687">Ribonucleoprotein</keyword>
<keyword id="KW-0689">Ribosomal protein</keyword>
<keyword id="KW-0694">RNA-binding</keyword>
<keyword id="KW-0699">rRNA-binding</keyword>
<proteinExistence type="inferred from homology"/>
<protein>
    <recommendedName>
        <fullName evidence="1">Small ribosomal subunit protein uS17</fullName>
    </recommendedName>
    <alternativeName>
        <fullName evidence="2">30S ribosomal protein S17</fullName>
    </alternativeName>
</protein>
<gene>
    <name evidence="1" type="primary">rpsQ</name>
    <name type="ordered locus">MYPE10080</name>
</gene>
<organism>
    <name type="scientific">Malacoplasma penetrans (strain HF-2)</name>
    <name type="common">Mycoplasma penetrans</name>
    <dbReference type="NCBI Taxonomy" id="272633"/>
    <lineage>
        <taxon>Bacteria</taxon>
        <taxon>Bacillati</taxon>
        <taxon>Mycoplasmatota</taxon>
        <taxon>Mycoplasmoidales</taxon>
        <taxon>Mycoplasmoidaceae</taxon>
        <taxon>Malacoplasma</taxon>
    </lineage>
</organism>
<sequence>MSSQVNTTRDSRRKILQGIVVSDKMQKTIVVQVERKSKHRLYKKLVITHKKYHAHDEKEECKIGDFVEIMETRPLSATKRWRLNKIIQKAK</sequence>
<name>RS17_MALP2</name>
<evidence type="ECO:0000255" key="1">
    <source>
        <dbReference type="HAMAP-Rule" id="MF_01345"/>
    </source>
</evidence>
<evidence type="ECO:0000305" key="2"/>
<reference key="1">
    <citation type="journal article" date="2002" name="Nucleic Acids Res.">
        <title>The complete genomic sequence of Mycoplasma penetrans, an intracellular bacterial pathogen in humans.</title>
        <authorList>
            <person name="Sasaki Y."/>
            <person name="Ishikawa J."/>
            <person name="Yamashita A."/>
            <person name="Oshima K."/>
            <person name="Kenri T."/>
            <person name="Furuya K."/>
            <person name="Yoshino C."/>
            <person name="Horino A."/>
            <person name="Shiba T."/>
            <person name="Sasaki T."/>
            <person name="Hattori M."/>
        </authorList>
    </citation>
    <scope>NUCLEOTIDE SEQUENCE [LARGE SCALE GENOMIC DNA]</scope>
    <source>
        <strain>HF-2</strain>
    </source>
</reference>
<comment type="function">
    <text evidence="1">One of the primary rRNA binding proteins, it binds specifically to the 5'-end of 16S ribosomal RNA.</text>
</comment>
<comment type="subunit">
    <text evidence="1">Part of the 30S ribosomal subunit.</text>
</comment>
<comment type="similarity">
    <text evidence="1">Belongs to the universal ribosomal protein uS17 family.</text>
</comment>